<protein>
    <recommendedName>
        <fullName evidence="5">Mastoparan-VB1</fullName>
        <shortName evidence="5">MP-VB1</shortName>
    </recommendedName>
</protein>
<accession>P0DRA1</accession>
<comment type="function">
    <text evidence="1 2 4">Antimicrobial peptide. Shows activity against both Gram-positive (S.aureus MIC=1.9-3.75 ug/ml) and -negative (E.coli MIC=15-60 ug/ml) bacteria, as well against fungi (C.albicans MIC=15 ug/ml). Also promotes moderate mast cell degranulation. Does not show hemolytic activity on rabbit and human erythrocytes (PubMed:18723059). Its mast cell degranulation activity may be related to the activation of G-protein coupled receptors in mast cells as well as interaction with other proteins located in cell endosomal membranes in the mast cells (By similarity).</text>
</comment>
<comment type="subcellular location">
    <subcellularLocation>
        <location evidence="4">Secreted</location>
    </subcellularLocation>
    <subcellularLocation>
        <location evidence="6">Target cell membrane</location>
    </subcellularLocation>
    <text evidence="7">Assumes an amphipathic alpha-helical conformation in a lipid environment.</text>
</comment>
<comment type="tissue specificity">
    <text evidence="7">Expressed by the venom gland.</text>
</comment>
<comment type="mass spectrometry" mass="1456.5" method="FAB" evidence="4"/>
<comment type="similarity">
    <text evidence="6">Belongs to the MCD family. Mastoparan subfamily.</text>
</comment>
<reference key="1">
    <citation type="journal article" date="2008" name="Peptides">
        <title>Antimicrobial peptides from the venoms of Vespa bicolor Fabricius.</title>
        <authorList>
            <person name="Chen W."/>
            <person name="Yang X."/>
            <person name="Yang X."/>
            <person name="Zhai L."/>
            <person name="Lu Z."/>
            <person name="Liu J."/>
            <person name="Yu H."/>
        </authorList>
    </citation>
    <scope>NUCLEOTIDE SEQUENCE [MRNA]</scope>
    <scope>PROTEIN SEQUENCE OF 46-59</scope>
    <scope>FUNCTION</scope>
    <scope>SUBCELLULAR LOCATION</scope>
    <scope>AMIDATION AT LEU-59</scope>
    <scope>MASS SPECTROMETRY</scope>
    <source>
        <tissue>Venom</tissue>
        <tissue>Venom gland</tissue>
    </source>
</reference>
<organism>
    <name type="scientific">Vespa bicolor</name>
    <name type="common">Black shield wasp</name>
    <dbReference type="NCBI Taxonomy" id="619325"/>
    <lineage>
        <taxon>Eukaryota</taxon>
        <taxon>Metazoa</taxon>
        <taxon>Ecdysozoa</taxon>
        <taxon>Arthropoda</taxon>
        <taxon>Hexapoda</taxon>
        <taxon>Insecta</taxon>
        <taxon>Pterygota</taxon>
        <taxon>Neoptera</taxon>
        <taxon>Endopterygota</taxon>
        <taxon>Hymenoptera</taxon>
        <taxon>Apocrita</taxon>
        <taxon>Aculeata</taxon>
        <taxon>Vespoidea</taxon>
        <taxon>Vespidae</taxon>
        <taxon>Vespinae</taxon>
        <taxon>Vespa</taxon>
    </lineage>
</organism>
<sequence length="60" mass="6268">MKNTILLLFTAFIFLSGFFGMSAEALADPKADPLAGPFPDADPDPINMKASAAVAKKLLG</sequence>
<keyword id="KW-0027">Amidation</keyword>
<keyword id="KW-0044">Antibiotic</keyword>
<keyword id="KW-0929">Antimicrobial</keyword>
<keyword id="KW-0903">Direct protein sequencing</keyword>
<keyword id="KW-0295">Fungicide</keyword>
<keyword id="KW-1213">G-protein coupled receptor impairing toxin</keyword>
<keyword id="KW-0391">Immunity</keyword>
<keyword id="KW-0399">Innate immunity</keyword>
<keyword id="KW-0467">Mast cell degranulation</keyword>
<keyword id="KW-0472">Membrane</keyword>
<keyword id="KW-0677">Repeat</keyword>
<keyword id="KW-0964">Secreted</keyword>
<keyword id="KW-0732">Signal</keyword>
<keyword id="KW-1052">Target cell membrane</keyword>
<keyword id="KW-1053">Target membrane</keyword>
<keyword id="KW-0800">Toxin</keyword>
<proteinExistence type="evidence at protein level"/>
<name>MAST1_VESBI</name>
<dbReference type="GO" id="GO:0005576">
    <property type="term" value="C:extracellular region"/>
    <property type="evidence" value="ECO:0007669"/>
    <property type="project" value="UniProtKB-SubCell"/>
</dbReference>
<dbReference type="GO" id="GO:0016020">
    <property type="term" value="C:membrane"/>
    <property type="evidence" value="ECO:0007669"/>
    <property type="project" value="UniProtKB-KW"/>
</dbReference>
<dbReference type="GO" id="GO:0044218">
    <property type="term" value="C:other organism cell membrane"/>
    <property type="evidence" value="ECO:0007669"/>
    <property type="project" value="UniProtKB-KW"/>
</dbReference>
<dbReference type="GO" id="GO:0090729">
    <property type="term" value="F:toxin activity"/>
    <property type="evidence" value="ECO:0007669"/>
    <property type="project" value="UniProtKB-KW"/>
</dbReference>
<dbReference type="GO" id="GO:0042742">
    <property type="term" value="P:defense response to bacterium"/>
    <property type="evidence" value="ECO:0007669"/>
    <property type="project" value="UniProtKB-KW"/>
</dbReference>
<dbReference type="GO" id="GO:0050832">
    <property type="term" value="P:defense response to fungus"/>
    <property type="evidence" value="ECO:0007669"/>
    <property type="project" value="UniProtKB-KW"/>
</dbReference>
<dbReference type="GO" id="GO:0045087">
    <property type="term" value="P:innate immune response"/>
    <property type="evidence" value="ECO:0007669"/>
    <property type="project" value="UniProtKB-KW"/>
</dbReference>
<dbReference type="GO" id="GO:0031640">
    <property type="term" value="P:killing of cells of another organism"/>
    <property type="evidence" value="ECO:0007669"/>
    <property type="project" value="UniProtKB-KW"/>
</dbReference>
<evidence type="ECO:0000250" key="1">
    <source>
        <dbReference type="UniProtKB" id="P01514"/>
    </source>
</evidence>
<evidence type="ECO:0000250" key="2">
    <source>
        <dbReference type="UniProtKB" id="P84914"/>
    </source>
</evidence>
<evidence type="ECO:0000255" key="3"/>
<evidence type="ECO:0000269" key="4">
    <source>
    </source>
</evidence>
<evidence type="ECO:0000303" key="5">
    <source>
    </source>
</evidence>
<evidence type="ECO:0000305" key="6"/>
<evidence type="ECO:0000305" key="7">
    <source>
    </source>
</evidence>
<feature type="signal peptide" evidence="3">
    <location>
        <begin position="1"/>
        <end position="23"/>
    </location>
</feature>
<feature type="propeptide" id="PRO_0000458800" evidence="7">
    <location>
        <begin position="24"/>
        <end position="45"/>
    </location>
</feature>
<feature type="peptide" id="PRO_0000458801" description="Mastoparan-VB1">
    <location>
        <begin position="46"/>
        <end position="59"/>
    </location>
</feature>
<feature type="repeat" description="AXPX 1" evidence="7">
    <location>
        <begin position="27"/>
        <end position="30"/>
    </location>
</feature>
<feature type="repeat" description="AXPX 2" evidence="7">
    <location>
        <begin position="31"/>
        <end position="34"/>
    </location>
</feature>
<feature type="repeat" description="AXPX 3" evidence="7">
    <location>
        <begin position="35"/>
        <end position="38"/>
    </location>
</feature>
<feature type="repeat" description="AXPX 4" evidence="7">
    <location>
        <begin position="40"/>
        <end position="43"/>
    </location>
</feature>
<feature type="modified residue" description="Leucine amide" evidence="4">
    <location>
        <position position="59"/>
    </location>
</feature>